<keyword id="KW-0067">ATP-binding</keyword>
<keyword id="KW-0436">Ligase</keyword>
<keyword id="KW-0547">Nucleotide-binding</keyword>
<keyword id="KW-0648">Protein biosynthesis</keyword>
<keyword id="KW-1185">Reference proteome</keyword>
<protein>
    <recommendedName>
        <fullName evidence="1">Aspartyl/glutamyl-tRNA(Asn/Gln) amidotransferase subunit B</fullName>
        <shortName evidence="1">Asp/Glu-ADT subunit B</shortName>
        <ecNumber evidence="1">6.3.5.-</ecNumber>
    </recommendedName>
</protein>
<reference key="1">
    <citation type="journal article" date="2002" name="Environ. Microbiol.">
        <title>Complete genome sequence and comparative analysis of the metabolically versatile Pseudomonas putida KT2440.</title>
        <authorList>
            <person name="Nelson K.E."/>
            <person name="Weinel C."/>
            <person name="Paulsen I.T."/>
            <person name="Dodson R.J."/>
            <person name="Hilbert H."/>
            <person name="Martins dos Santos V.A.P."/>
            <person name="Fouts D.E."/>
            <person name="Gill S.R."/>
            <person name="Pop M."/>
            <person name="Holmes M."/>
            <person name="Brinkac L.M."/>
            <person name="Beanan M.J."/>
            <person name="DeBoy R.T."/>
            <person name="Daugherty S.C."/>
            <person name="Kolonay J.F."/>
            <person name="Madupu R."/>
            <person name="Nelson W.C."/>
            <person name="White O."/>
            <person name="Peterson J.D."/>
            <person name="Khouri H.M."/>
            <person name="Hance I."/>
            <person name="Chris Lee P."/>
            <person name="Holtzapple E.K."/>
            <person name="Scanlan D."/>
            <person name="Tran K."/>
            <person name="Moazzez A."/>
            <person name="Utterback T.R."/>
            <person name="Rizzo M."/>
            <person name="Lee K."/>
            <person name="Kosack D."/>
            <person name="Moestl D."/>
            <person name="Wedler H."/>
            <person name="Lauber J."/>
            <person name="Stjepandic D."/>
            <person name="Hoheisel J."/>
            <person name="Straetz M."/>
            <person name="Heim S."/>
            <person name="Kiewitz C."/>
            <person name="Eisen J.A."/>
            <person name="Timmis K.N."/>
            <person name="Duesterhoeft A."/>
            <person name="Tuemmler B."/>
            <person name="Fraser C.M."/>
        </authorList>
    </citation>
    <scope>NUCLEOTIDE SEQUENCE [LARGE SCALE GENOMIC DNA]</scope>
    <source>
        <strain>ATCC 47054 / DSM 6125 / CFBP 8728 / NCIMB 11950 / KT2440</strain>
    </source>
</reference>
<feature type="chain" id="PRO_0000148824" description="Aspartyl/glutamyl-tRNA(Asn/Gln) amidotransferase subunit B">
    <location>
        <begin position="1"/>
        <end position="481"/>
    </location>
</feature>
<evidence type="ECO:0000255" key="1">
    <source>
        <dbReference type="HAMAP-Rule" id="MF_00121"/>
    </source>
</evidence>
<organism>
    <name type="scientific">Pseudomonas putida (strain ATCC 47054 / DSM 6125 / CFBP 8728 / NCIMB 11950 / KT2440)</name>
    <dbReference type="NCBI Taxonomy" id="160488"/>
    <lineage>
        <taxon>Bacteria</taxon>
        <taxon>Pseudomonadati</taxon>
        <taxon>Pseudomonadota</taxon>
        <taxon>Gammaproteobacteria</taxon>
        <taxon>Pseudomonadales</taxon>
        <taxon>Pseudomonadaceae</taxon>
        <taxon>Pseudomonas</taxon>
    </lineage>
</organism>
<accession>Q88PC0</accession>
<dbReference type="EC" id="6.3.5.-" evidence="1"/>
<dbReference type="EMBL" id="AE015451">
    <property type="protein sequence ID" value="AAN66555.1"/>
    <property type="molecule type" value="Genomic_DNA"/>
</dbReference>
<dbReference type="RefSeq" id="NP_743091.1">
    <property type="nucleotide sequence ID" value="NC_002947.4"/>
</dbReference>
<dbReference type="RefSeq" id="WP_010952130.1">
    <property type="nucleotide sequence ID" value="NZ_CP169744.1"/>
</dbReference>
<dbReference type="SMR" id="Q88PC0"/>
<dbReference type="STRING" id="160488.PP_0930"/>
<dbReference type="PaxDb" id="160488-PP_0930"/>
<dbReference type="GeneID" id="83678283"/>
<dbReference type="KEGG" id="ppu:PP_0930"/>
<dbReference type="PATRIC" id="fig|160488.4.peg.990"/>
<dbReference type="eggNOG" id="COG0064">
    <property type="taxonomic scope" value="Bacteria"/>
</dbReference>
<dbReference type="HOGENOM" id="CLU_019240_0_0_6"/>
<dbReference type="OrthoDB" id="9804078at2"/>
<dbReference type="PhylomeDB" id="Q88PC0"/>
<dbReference type="BioCyc" id="PPUT160488:G1G01-1004-MONOMER"/>
<dbReference type="Proteomes" id="UP000000556">
    <property type="component" value="Chromosome"/>
</dbReference>
<dbReference type="GO" id="GO:0050566">
    <property type="term" value="F:asparaginyl-tRNA synthase (glutamine-hydrolyzing) activity"/>
    <property type="evidence" value="ECO:0007669"/>
    <property type="project" value="RHEA"/>
</dbReference>
<dbReference type="GO" id="GO:0005524">
    <property type="term" value="F:ATP binding"/>
    <property type="evidence" value="ECO:0007669"/>
    <property type="project" value="UniProtKB-KW"/>
</dbReference>
<dbReference type="GO" id="GO:0050567">
    <property type="term" value="F:glutaminyl-tRNA synthase (glutamine-hydrolyzing) activity"/>
    <property type="evidence" value="ECO:0007669"/>
    <property type="project" value="UniProtKB-UniRule"/>
</dbReference>
<dbReference type="GO" id="GO:0070681">
    <property type="term" value="P:glutaminyl-tRNAGln biosynthesis via transamidation"/>
    <property type="evidence" value="ECO:0007669"/>
    <property type="project" value="TreeGrafter"/>
</dbReference>
<dbReference type="GO" id="GO:0006412">
    <property type="term" value="P:translation"/>
    <property type="evidence" value="ECO:0007669"/>
    <property type="project" value="UniProtKB-UniRule"/>
</dbReference>
<dbReference type="FunFam" id="1.10.10.410:FF:000001">
    <property type="entry name" value="Aspartyl/glutamyl-tRNA(Asn/Gln) amidotransferase subunit B"/>
    <property type="match status" value="1"/>
</dbReference>
<dbReference type="FunFam" id="1.10.150.380:FF:000001">
    <property type="entry name" value="Aspartyl/glutamyl-tRNA(Asn/Gln) amidotransferase subunit B"/>
    <property type="match status" value="1"/>
</dbReference>
<dbReference type="Gene3D" id="1.10.10.410">
    <property type="match status" value="1"/>
</dbReference>
<dbReference type="Gene3D" id="1.10.150.380">
    <property type="entry name" value="GatB domain, N-terminal subdomain"/>
    <property type="match status" value="1"/>
</dbReference>
<dbReference type="HAMAP" id="MF_00121">
    <property type="entry name" value="GatB"/>
    <property type="match status" value="1"/>
</dbReference>
<dbReference type="InterPro" id="IPR017959">
    <property type="entry name" value="Asn/Gln-tRNA_amidoTrfase_suB/E"/>
</dbReference>
<dbReference type="InterPro" id="IPR006075">
    <property type="entry name" value="Asn/Gln-tRNA_Trfase_suB/E_cat"/>
</dbReference>
<dbReference type="InterPro" id="IPR018027">
    <property type="entry name" value="Asn/Gln_amidotransferase"/>
</dbReference>
<dbReference type="InterPro" id="IPR003789">
    <property type="entry name" value="Asn/Gln_tRNA_amidoTrase-B-like"/>
</dbReference>
<dbReference type="InterPro" id="IPR004413">
    <property type="entry name" value="GatB"/>
</dbReference>
<dbReference type="InterPro" id="IPR042114">
    <property type="entry name" value="GatB_C_1"/>
</dbReference>
<dbReference type="InterPro" id="IPR023168">
    <property type="entry name" value="GatB_Yqey_C_2"/>
</dbReference>
<dbReference type="InterPro" id="IPR017958">
    <property type="entry name" value="Gln-tRNA_amidoTrfase_suB_CS"/>
</dbReference>
<dbReference type="InterPro" id="IPR014746">
    <property type="entry name" value="Gln_synth/guanido_kin_cat_dom"/>
</dbReference>
<dbReference type="NCBIfam" id="TIGR00133">
    <property type="entry name" value="gatB"/>
    <property type="match status" value="1"/>
</dbReference>
<dbReference type="NCBIfam" id="NF004012">
    <property type="entry name" value="PRK05477.1-2"/>
    <property type="match status" value="1"/>
</dbReference>
<dbReference type="NCBIfam" id="NF004014">
    <property type="entry name" value="PRK05477.1-4"/>
    <property type="match status" value="1"/>
</dbReference>
<dbReference type="NCBIfam" id="NF004015">
    <property type="entry name" value="PRK05477.1-5"/>
    <property type="match status" value="1"/>
</dbReference>
<dbReference type="PANTHER" id="PTHR11659">
    <property type="entry name" value="GLUTAMYL-TRNA GLN AMIDOTRANSFERASE SUBUNIT B MITOCHONDRIAL AND PROKARYOTIC PET112-RELATED"/>
    <property type="match status" value="1"/>
</dbReference>
<dbReference type="PANTHER" id="PTHR11659:SF0">
    <property type="entry name" value="GLUTAMYL-TRNA(GLN) AMIDOTRANSFERASE SUBUNIT B, MITOCHONDRIAL"/>
    <property type="match status" value="1"/>
</dbReference>
<dbReference type="Pfam" id="PF02934">
    <property type="entry name" value="GatB_N"/>
    <property type="match status" value="1"/>
</dbReference>
<dbReference type="Pfam" id="PF02637">
    <property type="entry name" value="GatB_Yqey"/>
    <property type="match status" value="1"/>
</dbReference>
<dbReference type="SMART" id="SM00845">
    <property type="entry name" value="GatB_Yqey"/>
    <property type="match status" value="1"/>
</dbReference>
<dbReference type="SUPFAM" id="SSF89095">
    <property type="entry name" value="GatB/YqeY motif"/>
    <property type="match status" value="1"/>
</dbReference>
<dbReference type="SUPFAM" id="SSF55931">
    <property type="entry name" value="Glutamine synthetase/guanido kinase"/>
    <property type="match status" value="1"/>
</dbReference>
<dbReference type="PROSITE" id="PS01234">
    <property type="entry name" value="GATB"/>
    <property type="match status" value="1"/>
</dbReference>
<comment type="function">
    <text evidence="1">Allows the formation of correctly charged Asn-tRNA(Asn) or Gln-tRNA(Gln) through the transamidation of misacylated Asp-tRNA(Asn) or Glu-tRNA(Gln) in organisms which lack either or both of asparaginyl-tRNA or glutaminyl-tRNA synthetases. The reaction takes place in the presence of glutamine and ATP through an activated phospho-Asp-tRNA(Asn) or phospho-Glu-tRNA(Gln).</text>
</comment>
<comment type="catalytic activity">
    <reaction evidence="1">
        <text>L-glutamyl-tRNA(Gln) + L-glutamine + ATP + H2O = L-glutaminyl-tRNA(Gln) + L-glutamate + ADP + phosphate + H(+)</text>
        <dbReference type="Rhea" id="RHEA:17521"/>
        <dbReference type="Rhea" id="RHEA-COMP:9681"/>
        <dbReference type="Rhea" id="RHEA-COMP:9684"/>
        <dbReference type="ChEBI" id="CHEBI:15377"/>
        <dbReference type="ChEBI" id="CHEBI:15378"/>
        <dbReference type="ChEBI" id="CHEBI:29985"/>
        <dbReference type="ChEBI" id="CHEBI:30616"/>
        <dbReference type="ChEBI" id="CHEBI:43474"/>
        <dbReference type="ChEBI" id="CHEBI:58359"/>
        <dbReference type="ChEBI" id="CHEBI:78520"/>
        <dbReference type="ChEBI" id="CHEBI:78521"/>
        <dbReference type="ChEBI" id="CHEBI:456216"/>
    </reaction>
</comment>
<comment type="catalytic activity">
    <reaction evidence="1">
        <text>L-aspartyl-tRNA(Asn) + L-glutamine + ATP + H2O = L-asparaginyl-tRNA(Asn) + L-glutamate + ADP + phosphate + 2 H(+)</text>
        <dbReference type="Rhea" id="RHEA:14513"/>
        <dbReference type="Rhea" id="RHEA-COMP:9674"/>
        <dbReference type="Rhea" id="RHEA-COMP:9677"/>
        <dbReference type="ChEBI" id="CHEBI:15377"/>
        <dbReference type="ChEBI" id="CHEBI:15378"/>
        <dbReference type="ChEBI" id="CHEBI:29985"/>
        <dbReference type="ChEBI" id="CHEBI:30616"/>
        <dbReference type="ChEBI" id="CHEBI:43474"/>
        <dbReference type="ChEBI" id="CHEBI:58359"/>
        <dbReference type="ChEBI" id="CHEBI:78515"/>
        <dbReference type="ChEBI" id="CHEBI:78516"/>
        <dbReference type="ChEBI" id="CHEBI:456216"/>
    </reaction>
</comment>
<comment type="subunit">
    <text evidence="1">Heterotrimer of A, B and C subunits.</text>
</comment>
<comment type="similarity">
    <text evidence="1">Belongs to the GatB/GatE family. GatB subfamily.</text>
</comment>
<proteinExistence type="inferred from homology"/>
<gene>
    <name evidence="1" type="primary">gatB</name>
    <name type="ordered locus">PP_0930</name>
</gene>
<name>GATB_PSEPK</name>
<sequence>MQWEVVIGLEIHTQLATQSKIFSGSATTFGSEPNTQASLVDLGMPGVLPVLNEQAVRMACMFGLAIDAEIGKRNVFARKNYFYPDLPKGYQISQMDLPIVGKGHLDIALEDGTIKRIGVTRAHLEEDAGKSLHEDFSGSTGIDLNRAGTPLLEIVSEPDMRSAKEAVAYVKAIHALVRYLGICDGNMAEGSLRCDCNVSIRPKGQTEFGTRCEIKNVNSFRFIERAINSEIQRQIDLIEDGGKVVQETRLYDPNKDETRSMRSKEEANDYRYFPDPDLLPVVIEDSFLETIRAGLPELPPQKVERFQTQYGLSAYDANVLASSREQADYFEEVVKIGGDAKLAANWVMVELGSLLNKLGVEIDQAPVSAAQLGGMLLRIRDNTISGKIAKTVFEAMAAGEGDADSIIESKGLKQVTDTGAIDKMLDEMLAANAEQVEQYRAADEAKRGKMFGFFVGQAMKASKGKANPGQVNQLLKAKLEG</sequence>